<accession>Q9Z762</accession>
<accession>Q9JQ48</accession>
<dbReference type="EMBL" id="AE001363">
    <property type="protein sequence ID" value="AAD18982.1"/>
    <property type="molecule type" value="Genomic_DNA"/>
</dbReference>
<dbReference type="EMBL" id="AE002161">
    <property type="protein sequence ID" value="AAF38801.1"/>
    <property type="molecule type" value="Genomic_DNA"/>
</dbReference>
<dbReference type="EMBL" id="BA000008">
    <property type="protein sequence ID" value="BAA99052.1"/>
    <property type="molecule type" value="Genomic_DNA"/>
</dbReference>
<dbReference type="EMBL" id="AE009440">
    <property type="protein sequence ID" value="AAP98802.1"/>
    <property type="molecule type" value="Genomic_DNA"/>
</dbReference>
<dbReference type="PIR" id="B86596">
    <property type="entry name" value="B86596"/>
</dbReference>
<dbReference type="PIR" id="D72028">
    <property type="entry name" value="D72028"/>
</dbReference>
<dbReference type="RefSeq" id="NP_225039.1">
    <property type="nucleotide sequence ID" value="NC_000922.1"/>
</dbReference>
<dbReference type="RefSeq" id="WP_010883479.1">
    <property type="nucleotide sequence ID" value="NZ_LN847257.1"/>
</dbReference>
<dbReference type="SMR" id="Q9Z762"/>
<dbReference type="STRING" id="406984.CPK_ORF00250"/>
<dbReference type="GeneID" id="45050896"/>
<dbReference type="KEGG" id="cpa:CP_1025"/>
<dbReference type="KEGG" id="cpj:yphC"/>
<dbReference type="KEGG" id="cpn:CPn_0844"/>
<dbReference type="KEGG" id="cpt:CpB0873"/>
<dbReference type="PATRIC" id="fig|115713.3.peg.924"/>
<dbReference type="eggNOG" id="COG1160">
    <property type="taxonomic scope" value="Bacteria"/>
</dbReference>
<dbReference type="HOGENOM" id="CLU_016077_6_2_0"/>
<dbReference type="OrthoDB" id="9805918at2"/>
<dbReference type="Proteomes" id="UP000000583">
    <property type="component" value="Chromosome"/>
</dbReference>
<dbReference type="Proteomes" id="UP000000801">
    <property type="component" value="Chromosome"/>
</dbReference>
<dbReference type="GO" id="GO:0005525">
    <property type="term" value="F:GTP binding"/>
    <property type="evidence" value="ECO:0007669"/>
    <property type="project" value="UniProtKB-UniRule"/>
</dbReference>
<dbReference type="GO" id="GO:0043022">
    <property type="term" value="F:ribosome binding"/>
    <property type="evidence" value="ECO:0007669"/>
    <property type="project" value="TreeGrafter"/>
</dbReference>
<dbReference type="GO" id="GO:0042254">
    <property type="term" value="P:ribosome biogenesis"/>
    <property type="evidence" value="ECO:0007669"/>
    <property type="project" value="UniProtKB-KW"/>
</dbReference>
<dbReference type="CDD" id="cd01894">
    <property type="entry name" value="EngA1"/>
    <property type="match status" value="1"/>
</dbReference>
<dbReference type="CDD" id="cd01895">
    <property type="entry name" value="EngA2"/>
    <property type="match status" value="1"/>
</dbReference>
<dbReference type="FunFam" id="3.40.50.300:FF:000040">
    <property type="entry name" value="GTPase Der"/>
    <property type="match status" value="1"/>
</dbReference>
<dbReference type="FunFam" id="3.40.50.300:FF:000494">
    <property type="entry name" value="tRNA modification GTPase MnmE"/>
    <property type="match status" value="1"/>
</dbReference>
<dbReference type="Gene3D" id="3.30.300.20">
    <property type="match status" value="1"/>
</dbReference>
<dbReference type="Gene3D" id="3.40.50.300">
    <property type="entry name" value="P-loop containing nucleotide triphosphate hydrolases"/>
    <property type="match status" value="2"/>
</dbReference>
<dbReference type="HAMAP" id="MF_00195">
    <property type="entry name" value="GTPase_Der"/>
    <property type="match status" value="1"/>
</dbReference>
<dbReference type="InterPro" id="IPR031166">
    <property type="entry name" value="G_ENGA"/>
</dbReference>
<dbReference type="InterPro" id="IPR006073">
    <property type="entry name" value="GTP-bd"/>
</dbReference>
<dbReference type="InterPro" id="IPR016484">
    <property type="entry name" value="GTPase_Der"/>
</dbReference>
<dbReference type="InterPro" id="IPR032859">
    <property type="entry name" value="KH_dom-like"/>
</dbReference>
<dbReference type="InterPro" id="IPR015946">
    <property type="entry name" value="KH_dom-like_a/b"/>
</dbReference>
<dbReference type="InterPro" id="IPR027417">
    <property type="entry name" value="P-loop_NTPase"/>
</dbReference>
<dbReference type="InterPro" id="IPR005225">
    <property type="entry name" value="Small_GTP-bd"/>
</dbReference>
<dbReference type="NCBIfam" id="TIGR03594">
    <property type="entry name" value="GTPase_EngA"/>
    <property type="match status" value="1"/>
</dbReference>
<dbReference type="NCBIfam" id="TIGR00231">
    <property type="entry name" value="small_GTP"/>
    <property type="match status" value="2"/>
</dbReference>
<dbReference type="PANTHER" id="PTHR43834">
    <property type="entry name" value="GTPASE DER"/>
    <property type="match status" value="1"/>
</dbReference>
<dbReference type="PANTHER" id="PTHR43834:SF6">
    <property type="entry name" value="GTPASE DER"/>
    <property type="match status" value="1"/>
</dbReference>
<dbReference type="Pfam" id="PF14714">
    <property type="entry name" value="KH_dom-like"/>
    <property type="match status" value="1"/>
</dbReference>
<dbReference type="Pfam" id="PF01926">
    <property type="entry name" value="MMR_HSR1"/>
    <property type="match status" value="2"/>
</dbReference>
<dbReference type="PIRSF" id="PIRSF006485">
    <property type="entry name" value="GTP-binding_EngA"/>
    <property type="match status" value="1"/>
</dbReference>
<dbReference type="PRINTS" id="PR00326">
    <property type="entry name" value="GTP1OBG"/>
</dbReference>
<dbReference type="SUPFAM" id="SSF52540">
    <property type="entry name" value="P-loop containing nucleoside triphosphate hydrolases"/>
    <property type="match status" value="2"/>
</dbReference>
<dbReference type="PROSITE" id="PS51712">
    <property type="entry name" value="G_ENGA"/>
    <property type="match status" value="2"/>
</dbReference>
<reference key="1">
    <citation type="journal article" date="1999" name="Nat. Genet.">
        <title>Comparative genomes of Chlamydia pneumoniae and C. trachomatis.</title>
        <authorList>
            <person name="Kalman S."/>
            <person name="Mitchell W.P."/>
            <person name="Marathe R."/>
            <person name="Lammel C.J."/>
            <person name="Fan J."/>
            <person name="Hyman R.W."/>
            <person name="Olinger L."/>
            <person name="Grimwood J."/>
            <person name="Davis R.W."/>
            <person name="Stephens R.S."/>
        </authorList>
    </citation>
    <scope>NUCLEOTIDE SEQUENCE [LARGE SCALE GENOMIC DNA]</scope>
    <source>
        <strain>CWL029</strain>
    </source>
</reference>
<reference key="2">
    <citation type="journal article" date="2000" name="Nucleic Acids Res.">
        <title>Genome sequences of Chlamydia trachomatis MoPn and Chlamydia pneumoniae AR39.</title>
        <authorList>
            <person name="Read T.D."/>
            <person name="Brunham R.C."/>
            <person name="Shen C."/>
            <person name="Gill S.R."/>
            <person name="Heidelberg J.F."/>
            <person name="White O."/>
            <person name="Hickey E.K."/>
            <person name="Peterson J.D."/>
            <person name="Utterback T.R."/>
            <person name="Berry K.J."/>
            <person name="Bass S."/>
            <person name="Linher K.D."/>
            <person name="Weidman J.F."/>
            <person name="Khouri H.M."/>
            <person name="Craven B."/>
            <person name="Bowman C."/>
            <person name="Dodson R.J."/>
            <person name="Gwinn M.L."/>
            <person name="Nelson W.C."/>
            <person name="DeBoy R.T."/>
            <person name="Kolonay J.F."/>
            <person name="McClarty G."/>
            <person name="Salzberg S.L."/>
            <person name="Eisen J.A."/>
            <person name="Fraser C.M."/>
        </authorList>
    </citation>
    <scope>NUCLEOTIDE SEQUENCE [LARGE SCALE GENOMIC DNA]</scope>
    <source>
        <strain>AR39</strain>
    </source>
</reference>
<reference key="3">
    <citation type="journal article" date="2000" name="Nucleic Acids Res.">
        <title>Comparison of whole genome sequences of Chlamydia pneumoniae J138 from Japan and CWL029 from USA.</title>
        <authorList>
            <person name="Shirai M."/>
            <person name="Hirakawa H."/>
            <person name="Kimoto M."/>
            <person name="Tabuchi M."/>
            <person name="Kishi F."/>
            <person name="Ouchi K."/>
            <person name="Shiba T."/>
            <person name="Ishii K."/>
            <person name="Hattori M."/>
            <person name="Kuhara S."/>
            <person name="Nakazawa T."/>
        </authorList>
    </citation>
    <scope>NUCLEOTIDE SEQUENCE [LARGE SCALE GENOMIC DNA]</scope>
    <source>
        <strain>J138</strain>
    </source>
</reference>
<reference key="4">
    <citation type="submission" date="2002-05" db="EMBL/GenBank/DDBJ databases">
        <title>The genome sequence of Chlamydia pneumoniae TW183 and comparison with other Chlamydia strains based on whole genome sequence analysis.</title>
        <authorList>
            <person name="Geng M.M."/>
            <person name="Schuhmacher A."/>
            <person name="Muehldorfer I."/>
            <person name="Bensch K.W."/>
            <person name="Schaefer K.P."/>
            <person name="Schneider S."/>
            <person name="Pohl T."/>
            <person name="Essig A."/>
            <person name="Marre R."/>
            <person name="Melchers K."/>
        </authorList>
    </citation>
    <scope>NUCLEOTIDE SEQUENCE [LARGE SCALE GENOMIC DNA]</scope>
    <source>
        <strain>TW-183</strain>
    </source>
</reference>
<name>DER_CHLPN</name>
<sequence length="487" mass="55372">MLKIAILGRPNVGKSSLFNRLCKRSLAIVNSQEGTTRDRLYGELHAFGVPAQVIDTGGVDHNSEDYFQKHIYNQALTGAKEADVLLLVIDIRCGITEEDAHLAKLLLPLKKPLILVANKADSRQEELQIHETYKLGIRDIVVTSTAHDKHIDTLLQRIKLVANLPEPREEEEEGLEELSVDEHEESEAALPSNTFPDFSEVFTEGFSPEEPCTIPESPQQAPKTLKIALIGRPNVGKSSIINGLLNEERCIIDNTPGTTRDNIDILYSHKDRQYLFIDTAGLRKMKSVKNSIEWISSSRTEKAISRADICLLVIDATQKLSSYEKRILSLISKRKKPHIILINKWDLLEEVRMEHYCKDLRATDPYLGQAKMLCISATTKRNLKKIFSAIDELHHVVSNKVPTPIVNKTLASALHRNHPQVIQGRRLRIYYAIQKTTTPLQFLLFINAKSLLTKHYEYYLKNTLKSSFNLYGIPFDLEFKEKPKRHN</sequence>
<organism>
    <name type="scientific">Chlamydia pneumoniae</name>
    <name type="common">Chlamydophila pneumoniae</name>
    <dbReference type="NCBI Taxonomy" id="83558"/>
    <lineage>
        <taxon>Bacteria</taxon>
        <taxon>Pseudomonadati</taxon>
        <taxon>Chlamydiota</taxon>
        <taxon>Chlamydiia</taxon>
        <taxon>Chlamydiales</taxon>
        <taxon>Chlamydiaceae</taxon>
        <taxon>Chlamydia/Chlamydophila group</taxon>
        <taxon>Chlamydia</taxon>
    </lineage>
</organism>
<evidence type="ECO:0000255" key="1">
    <source>
        <dbReference type="HAMAP-Rule" id="MF_00195"/>
    </source>
</evidence>
<evidence type="ECO:0000256" key="2">
    <source>
        <dbReference type="SAM" id="MobiDB-lite"/>
    </source>
</evidence>
<keyword id="KW-0342">GTP-binding</keyword>
<keyword id="KW-0547">Nucleotide-binding</keyword>
<keyword id="KW-0677">Repeat</keyword>
<keyword id="KW-0690">Ribosome biogenesis</keyword>
<feature type="chain" id="PRO_0000178980" description="GTPase Der">
    <location>
        <begin position="1"/>
        <end position="487"/>
    </location>
</feature>
<feature type="domain" description="EngA-type G 1">
    <location>
        <begin position="2"/>
        <end position="166"/>
    </location>
</feature>
<feature type="domain" description="EngA-type G 2">
    <location>
        <begin position="225"/>
        <end position="398"/>
    </location>
</feature>
<feature type="domain" description="KH-like" evidence="1">
    <location>
        <begin position="399"/>
        <end position="483"/>
    </location>
</feature>
<feature type="region of interest" description="Disordered" evidence="2">
    <location>
        <begin position="165"/>
        <end position="194"/>
    </location>
</feature>
<feature type="compositionally biased region" description="Acidic residues" evidence="2">
    <location>
        <begin position="168"/>
        <end position="187"/>
    </location>
</feature>
<feature type="binding site" evidence="1">
    <location>
        <begin position="8"/>
        <end position="15"/>
    </location>
    <ligand>
        <name>GTP</name>
        <dbReference type="ChEBI" id="CHEBI:37565"/>
        <label>1</label>
    </ligand>
</feature>
<feature type="binding site" evidence="1">
    <location>
        <begin position="55"/>
        <end position="59"/>
    </location>
    <ligand>
        <name>GTP</name>
        <dbReference type="ChEBI" id="CHEBI:37565"/>
        <label>1</label>
    </ligand>
</feature>
<feature type="binding site" evidence="1">
    <location>
        <begin position="118"/>
        <end position="121"/>
    </location>
    <ligand>
        <name>GTP</name>
        <dbReference type="ChEBI" id="CHEBI:37565"/>
        <label>1</label>
    </ligand>
</feature>
<feature type="binding site" evidence="1">
    <location>
        <begin position="231"/>
        <end position="238"/>
    </location>
    <ligand>
        <name>GTP</name>
        <dbReference type="ChEBI" id="CHEBI:37565"/>
        <label>2</label>
    </ligand>
</feature>
<feature type="binding site" evidence="1">
    <location>
        <begin position="278"/>
        <end position="282"/>
    </location>
    <ligand>
        <name>GTP</name>
        <dbReference type="ChEBI" id="CHEBI:37565"/>
        <label>2</label>
    </ligand>
</feature>
<feature type="binding site" evidence="1">
    <location>
        <begin position="343"/>
        <end position="346"/>
    </location>
    <ligand>
        <name>GTP</name>
        <dbReference type="ChEBI" id="CHEBI:37565"/>
        <label>2</label>
    </ligand>
</feature>
<protein>
    <recommendedName>
        <fullName evidence="1">GTPase Der</fullName>
    </recommendedName>
    <alternativeName>
        <fullName evidence="1">GTP-binding protein EngA</fullName>
    </alternativeName>
</protein>
<comment type="function">
    <text evidence="1">GTPase that plays an essential role in the late steps of ribosome biogenesis.</text>
</comment>
<comment type="subunit">
    <text evidence="1">Associates with the 50S ribosomal subunit.</text>
</comment>
<comment type="similarity">
    <text evidence="1">Belongs to the TRAFAC class TrmE-Era-EngA-EngB-Septin-like GTPase superfamily. EngA (Der) GTPase family.</text>
</comment>
<proteinExistence type="inferred from homology"/>
<gene>
    <name evidence="1" type="primary">der</name>
    <name type="synonym">engA</name>
    <name type="ordered locus">CPn_0844</name>
    <name type="ordered locus">CP_1025</name>
    <name type="ordered locus">CpB0873</name>
</gene>